<reference key="1">
    <citation type="journal article" date="2016" name="Genome Announc.">
        <title>Complete genome sequence of Alkaliphilus metalliredigens strain QYMF, an alkaliphilic and metal-reducing bacterium isolated from borax-contaminated leachate ponds.</title>
        <authorList>
            <person name="Hwang C."/>
            <person name="Copeland A."/>
            <person name="Lucas S."/>
            <person name="Lapidus A."/>
            <person name="Barry K."/>
            <person name="Detter J.C."/>
            <person name="Glavina Del Rio T."/>
            <person name="Hammon N."/>
            <person name="Israni S."/>
            <person name="Dalin E."/>
            <person name="Tice H."/>
            <person name="Pitluck S."/>
            <person name="Chertkov O."/>
            <person name="Brettin T."/>
            <person name="Bruce D."/>
            <person name="Han C."/>
            <person name="Schmutz J."/>
            <person name="Larimer F."/>
            <person name="Land M.L."/>
            <person name="Hauser L."/>
            <person name="Kyrpides N."/>
            <person name="Mikhailova N."/>
            <person name="Ye Q."/>
            <person name="Zhou J."/>
            <person name="Richardson P."/>
            <person name="Fields M.W."/>
        </authorList>
    </citation>
    <scope>NUCLEOTIDE SEQUENCE [LARGE SCALE GENOMIC DNA]</scope>
    <source>
        <strain>QYMF</strain>
    </source>
</reference>
<evidence type="ECO:0000255" key="1">
    <source>
        <dbReference type="HAMAP-Rule" id="MF_00321"/>
    </source>
</evidence>
<keyword id="KW-0131">Cell cycle</keyword>
<keyword id="KW-0132">Cell division</keyword>
<keyword id="KW-0342">GTP-binding</keyword>
<keyword id="KW-0460">Magnesium</keyword>
<keyword id="KW-0479">Metal-binding</keyword>
<keyword id="KW-0547">Nucleotide-binding</keyword>
<keyword id="KW-1185">Reference proteome</keyword>
<keyword id="KW-0717">Septation</keyword>
<dbReference type="EMBL" id="CP000724">
    <property type="protein sequence ID" value="ABR47285.1"/>
    <property type="molecule type" value="Genomic_DNA"/>
</dbReference>
<dbReference type="RefSeq" id="WP_012062327.1">
    <property type="nucleotide sequence ID" value="NC_009633.1"/>
</dbReference>
<dbReference type="SMR" id="A6TM67"/>
<dbReference type="STRING" id="293826.Amet_1073"/>
<dbReference type="KEGG" id="amt:Amet_1073"/>
<dbReference type="eggNOG" id="COG0218">
    <property type="taxonomic scope" value="Bacteria"/>
</dbReference>
<dbReference type="HOGENOM" id="CLU_033732_3_0_9"/>
<dbReference type="OrthoDB" id="9804921at2"/>
<dbReference type="Proteomes" id="UP000001572">
    <property type="component" value="Chromosome"/>
</dbReference>
<dbReference type="GO" id="GO:0005829">
    <property type="term" value="C:cytosol"/>
    <property type="evidence" value="ECO:0007669"/>
    <property type="project" value="TreeGrafter"/>
</dbReference>
<dbReference type="GO" id="GO:0005525">
    <property type="term" value="F:GTP binding"/>
    <property type="evidence" value="ECO:0007669"/>
    <property type="project" value="UniProtKB-UniRule"/>
</dbReference>
<dbReference type="GO" id="GO:0046872">
    <property type="term" value="F:metal ion binding"/>
    <property type="evidence" value="ECO:0007669"/>
    <property type="project" value="UniProtKB-KW"/>
</dbReference>
<dbReference type="GO" id="GO:0000917">
    <property type="term" value="P:division septum assembly"/>
    <property type="evidence" value="ECO:0007669"/>
    <property type="project" value="UniProtKB-KW"/>
</dbReference>
<dbReference type="CDD" id="cd01876">
    <property type="entry name" value="YihA_EngB"/>
    <property type="match status" value="1"/>
</dbReference>
<dbReference type="FunFam" id="3.40.50.300:FF:000098">
    <property type="entry name" value="Probable GTP-binding protein EngB"/>
    <property type="match status" value="1"/>
</dbReference>
<dbReference type="Gene3D" id="3.40.50.300">
    <property type="entry name" value="P-loop containing nucleotide triphosphate hydrolases"/>
    <property type="match status" value="1"/>
</dbReference>
<dbReference type="HAMAP" id="MF_00321">
    <property type="entry name" value="GTPase_EngB"/>
    <property type="match status" value="1"/>
</dbReference>
<dbReference type="InterPro" id="IPR030393">
    <property type="entry name" value="G_ENGB_dom"/>
</dbReference>
<dbReference type="InterPro" id="IPR006073">
    <property type="entry name" value="GTP-bd"/>
</dbReference>
<dbReference type="InterPro" id="IPR019987">
    <property type="entry name" value="GTP-bd_ribosome_bio_YsxC"/>
</dbReference>
<dbReference type="InterPro" id="IPR027417">
    <property type="entry name" value="P-loop_NTPase"/>
</dbReference>
<dbReference type="InterPro" id="IPR005225">
    <property type="entry name" value="Small_GTP-bd"/>
</dbReference>
<dbReference type="NCBIfam" id="TIGR03598">
    <property type="entry name" value="GTPase_YsxC"/>
    <property type="match status" value="1"/>
</dbReference>
<dbReference type="NCBIfam" id="TIGR00231">
    <property type="entry name" value="small_GTP"/>
    <property type="match status" value="1"/>
</dbReference>
<dbReference type="PANTHER" id="PTHR11649:SF13">
    <property type="entry name" value="ENGB-TYPE G DOMAIN-CONTAINING PROTEIN"/>
    <property type="match status" value="1"/>
</dbReference>
<dbReference type="PANTHER" id="PTHR11649">
    <property type="entry name" value="MSS1/TRME-RELATED GTP-BINDING PROTEIN"/>
    <property type="match status" value="1"/>
</dbReference>
<dbReference type="Pfam" id="PF01926">
    <property type="entry name" value="MMR_HSR1"/>
    <property type="match status" value="1"/>
</dbReference>
<dbReference type="SUPFAM" id="SSF52540">
    <property type="entry name" value="P-loop containing nucleoside triphosphate hydrolases"/>
    <property type="match status" value="1"/>
</dbReference>
<dbReference type="PROSITE" id="PS51706">
    <property type="entry name" value="G_ENGB"/>
    <property type="match status" value="1"/>
</dbReference>
<proteinExistence type="inferred from homology"/>
<organism>
    <name type="scientific">Alkaliphilus metalliredigens (strain QYMF)</name>
    <dbReference type="NCBI Taxonomy" id="293826"/>
    <lineage>
        <taxon>Bacteria</taxon>
        <taxon>Bacillati</taxon>
        <taxon>Bacillota</taxon>
        <taxon>Clostridia</taxon>
        <taxon>Peptostreptococcales</taxon>
        <taxon>Natronincolaceae</taxon>
        <taxon>Alkaliphilus</taxon>
    </lineage>
</organism>
<gene>
    <name evidence="1" type="primary">engB</name>
    <name type="ordered locus">Amet_1073</name>
</gene>
<sequence length="208" mass="23686">MKIKTSDIVMSAVAPKQYPEEGLPEIALAGRSNVGKSSLINTILNRKKLARVSSSPGKTRTLNFYLINKEFHLVDLPGYGYARVSKGEKSSWGKMLETYLSNRPNLYEVVLLIDIRHEPSEQDQQMYQWIRHYGYGTIVVATKSDKIARSQHQKHFKMIRDTLGMSPEDRLIPISSLKKLGIEQLWGALEDIFVENELPITIEKEAPK</sequence>
<name>ENGB_ALKMQ</name>
<accession>A6TM67</accession>
<comment type="function">
    <text evidence="1">Necessary for normal cell division and for the maintenance of normal septation.</text>
</comment>
<comment type="cofactor">
    <cofactor evidence="1">
        <name>Mg(2+)</name>
        <dbReference type="ChEBI" id="CHEBI:18420"/>
    </cofactor>
</comment>
<comment type="similarity">
    <text evidence="1">Belongs to the TRAFAC class TrmE-Era-EngA-EngB-Septin-like GTPase superfamily. EngB GTPase family.</text>
</comment>
<protein>
    <recommendedName>
        <fullName evidence="1">Probable GTP-binding protein EngB</fullName>
    </recommendedName>
</protein>
<feature type="chain" id="PRO_1000059466" description="Probable GTP-binding protein EngB">
    <location>
        <begin position="1"/>
        <end position="208"/>
    </location>
</feature>
<feature type="domain" description="EngB-type G" evidence="1">
    <location>
        <begin position="22"/>
        <end position="195"/>
    </location>
</feature>
<feature type="binding site" evidence="1">
    <location>
        <begin position="30"/>
        <end position="37"/>
    </location>
    <ligand>
        <name>GTP</name>
        <dbReference type="ChEBI" id="CHEBI:37565"/>
    </ligand>
</feature>
<feature type="binding site" evidence="1">
    <location>
        <position position="37"/>
    </location>
    <ligand>
        <name>Mg(2+)</name>
        <dbReference type="ChEBI" id="CHEBI:18420"/>
    </ligand>
</feature>
<feature type="binding site" evidence="1">
    <location>
        <begin position="57"/>
        <end position="61"/>
    </location>
    <ligand>
        <name>GTP</name>
        <dbReference type="ChEBI" id="CHEBI:37565"/>
    </ligand>
</feature>
<feature type="binding site" evidence="1">
    <location>
        <position position="59"/>
    </location>
    <ligand>
        <name>Mg(2+)</name>
        <dbReference type="ChEBI" id="CHEBI:18420"/>
    </ligand>
</feature>
<feature type="binding site" evidence="1">
    <location>
        <begin position="75"/>
        <end position="78"/>
    </location>
    <ligand>
        <name>GTP</name>
        <dbReference type="ChEBI" id="CHEBI:37565"/>
    </ligand>
</feature>
<feature type="binding site" evidence="1">
    <location>
        <begin position="142"/>
        <end position="145"/>
    </location>
    <ligand>
        <name>GTP</name>
        <dbReference type="ChEBI" id="CHEBI:37565"/>
    </ligand>
</feature>
<feature type="binding site" evidence="1">
    <location>
        <begin position="174"/>
        <end position="176"/>
    </location>
    <ligand>
        <name>GTP</name>
        <dbReference type="ChEBI" id="CHEBI:37565"/>
    </ligand>
</feature>